<accession>Q5XAM5</accession>
<keyword id="KW-0067">ATP-binding</keyword>
<keyword id="KW-0436">Ligase</keyword>
<keyword id="KW-0460">Magnesium</keyword>
<keyword id="KW-0479">Metal-binding</keyword>
<keyword id="KW-0520">NAD</keyword>
<keyword id="KW-0547">Nucleotide-binding</keyword>
<feature type="chain" id="PRO_0000152210" description="NH(3)-dependent NAD(+) synthetase">
    <location>
        <begin position="1"/>
        <end position="274"/>
    </location>
</feature>
<feature type="binding site" evidence="1">
    <location>
        <begin position="46"/>
        <end position="53"/>
    </location>
    <ligand>
        <name>ATP</name>
        <dbReference type="ChEBI" id="CHEBI:30616"/>
    </ligand>
</feature>
<feature type="binding site" evidence="1">
    <location>
        <position position="52"/>
    </location>
    <ligand>
        <name>Mg(2+)</name>
        <dbReference type="ChEBI" id="CHEBI:18420"/>
    </ligand>
</feature>
<feature type="binding site" evidence="1">
    <location>
        <position position="140"/>
    </location>
    <ligand>
        <name>deamido-NAD(+)</name>
        <dbReference type="ChEBI" id="CHEBI:58437"/>
    </ligand>
</feature>
<feature type="binding site" evidence="1">
    <location>
        <position position="160"/>
    </location>
    <ligand>
        <name>ATP</name>
        <dbReference type="ChEBI" id="CHEBI:30616"/>
    </ligand>
</feature>
<feature type="binding site" evidence="1">
    <location>
        <position position="165"/>
    </location>
    <ligand>
        <name>Mg(2+)</name>
        <dbReference type="ChEBI" id="CHEBI:18420"/>
    </ligand>
</feature>
<feature type="binding site" evidence="1">
    <location>
        <position position="173"/>
    </location>
    <ligand>
        <name>deamido-NAD(+)</name>
        <dbReference type="ChEBI" id="CHEBI:58437"/>
    </ligand>
</feature>
<feature type="binding site" evidence="1">
    <location>
        <position position="180"/>
    </location>
    <ligand>
        <name>deamido-NAD(+)</name>
        <dbReference type="ChEBI" id="CHEBI:58437"/>
    </ligand>
</feature>
<feature type="binding site" evidence="1">
    <location>
        <position position="189"/>
    </location>
    <ligand>
        <name>ATP</name>
        <dbReference type="ChEBI" id="CHEBI:30616"/>
    </ligand>
</feature>
<feature type="binding site" evidence="1">
    <location>
        <position position="211"/>
    </location>
    <ligand>
        <name>ATP</name>
        <dbReference type="ChEBI" id="CHEBI:30616"/>
    </ligand>
</feature>
<feature type="binding site" evidence="1">
    <location>
        <begin position="260"/>
        <end position="261"/>
    </location>
    <ligand>
        <name>deamido-NAD(+)</name>
        <dbReference type="ChEBI" id="CHEBI:58437"/>
    </ligand>
</feature>
<sequence length="274" mass="30104">MTLQEEIIRQLGVKASIDPKEEIRKTVDFLKAYLRKHSFLKTYVLGISGGQDSTLAGKLAQMAIAELREETGDQAYQFIAVRLPYGVQADEADAQKALAFIAPDQTLTINIKAAVDGQVEALQAAGVEISDFNKGNIKARQRMISQYAIAGQMAGAVIGTDHAAENITGFFTKFGDGGADILPLFRLNKRQGKALLKVLGADAALYEKVPTADLEDQKPGLADEVALGVTYQDIDDYLEGKLISKVAQATIEKWWHKGQHKRHLPITIFDDFWK</sequence>
<protein>
    <recommendedName>
        <fullName evidence="1">NH(3)-dependent NAD(+) synthetase</fullName>
        <ecNumber evidence="1">6.3.1.5</ecNumber>
    </recommendedName>
</protein>
<name>NADE_STRP6</name>
<reference key="1">
    <citation type="journal article" date="2004" name="J. Infect. Dis.">
        <title>Progress toward characterization of the group A Streptococcus metagenome: complete genome sequence of a macrolide-resistant serotype M6 strain.</title>
        <authorList>
            <person name="Banks D.J."/>
            <person name="Porcella S.F."/>
            <person name="Barbian K.D."/>
            <person name="Beres S.B."/>
            <person name="Philips L.E."/>
            <person name="Voyich J.M."/>
            <person name="DeLeo F.R."/>
            <person name="Martin J.M."/>
            <person name="Somerville G.A."/>
            <person name="Musser J.M."/>
        </authorList>
    </citation>
    <scope>NUCLEOTIDE SEQUENCE [LARGE SCALE GENOMIC DNA]</scope>
    <source>
        <strain>ATCC BAA-946 / MGAS10394</strain>
    </source>
</reference>
<organism>
    <name type="scientific">Streptococcus pyogenes serotype M6 (strain ATCC BAA-946 / MGAS10394)</name>
    <dbReference type="NCBI Taxonomy" id="286636"/>
    <lineage>
        <taxon>Bacteria</taxon>
        <taxon>Bacillati</taxon>
        <taxon>Bacillota</taxon>
        <taxon>Bacilli</taxon>
        <taxon>Lactobacillales</taxon>
        <taxon>Streptococcaceae</taxon>
        <taxon>Streptococcus</taxon>
    </lineage>
</organism>
<proteinExistence type="inferred from homology"/>
<gene>
    <name evidence="1" type="primary">nadE</name>
    <name type="ordered locus">M6_Spy1403</name>
</gene>
<dbReference type="EC" id="6.3.1.5" evidence="1"/>
<dbReference type="EMBL" id="CP000003">
    <property type="protein sequence ID" value="AAT87538.1"/>
    <property type="status" value="ALT_INIT"/>
    <property type="molecule type" value="Genomic_DNA"/>
</dbReference>
<dbReference type="RefSeq" id="WP_011888661.1">
    <property type="nucleotide sequence ID" value="NC_006086.1"/>
</dbReference>
<dbReference type="SMR" id="Q5XAM5"/>
<dbReference type="KEGG" id="spa:M6_Spy1403"/>
<dbReference type="HOGENOM" id="CLU_059327_3_0_9"/>
<dbReference type="UniPathway" id="UPA00253">
    <property type="reaction ID" value="UER00333"/>
</dbReference>
<dbReference type="Proteomes" id="UP000001167">
    <property type="component" value="Chromosome"/>
</dbReference>
<dbReference type="GO" id="GO:0005737">
    <property type="term" value="C:cytoplasm"/>
    <property type="evidence" value="ECO:0007669"/>
    <property type="project" value="InterPro"/>
</dbReference>
<dbReference type="GO" id="GO:0005524">
    <property type="term" value="F:ATP binding"/>
    <property type="evidence" value="ECO:0007669"/>
    <property type="project" value="UniProtKB-UniRule"/>
</dbReference>
<dbReference type="GO" id="GO:0004359">
    <property type="term" value="F:glutaminase activity"/>
    <property type="evidence" value="ECO:0007669"/>
    <property type="project" value="InterPro"/>
</dbReference>
<dbReference type="GO" id="GO:0046872">
    <property type="term" value="F:metal ion binding"/>
    <property type="evidence" value="ECO:0007669"/>
    <property type="project" value="UniProtKB-KW"/>
</dbReference>
<dbReference type="GO" id="GO:0003952">
    <property type="term" value="F:NAD+ synthase (glutamine-hydrolyzing) activity"/>
    <property type="evidence" value="ECO:0007669"/>
    <property type="project" value="InterPro"/>
</dbReference>
<dbReference type="GO" id="GO:0008795">
    <property type="term" value="F:NAD+ synthase activity"/>
    <property type="evidence" value="ECO:0007669"/>
    <property type="project" value="UniProtKB-UniRule"/>
</dbReference>
<dbReference type="GO" id="GO:0009435">
    <property type="term" value="P:NAD biosynthetic process"/>
    <property type="evidence" value="ECO:0007669"/>
    <property type="project" value="UniProtKB-UniRule"/>
</dbReference>
<dbReference type="CDD" id="cd00553">
    <property type="entry name" value="NAD_synthase"/>
    <property type="match status" value="1"/>
</dbReference>
<dbReference type="FunFam" id="3.40.50.620:FF:000015">
    <property type="entry name" value="NH(3)-dependent NAD(+) synthetase"/>
    <property type="match status" value="1"/>
</dbReference>
<dbReference type="Gene3D" id="3.40.50.620">
    <property type="entry name" value="HUPs"/>
    <property type="match status" value="1"/>
</dbReference>
<dbReference type="HAMAP" id="MF_00193">
    <property type="entry name" value="NadE_ammonia_dep"/>
    <property type="match status" value="1"/>
</dbReference>
<dbReference type="InterPro" id="IPR022310">
    <property type="entry name" value="NAD/GMP_synthase"/>
</dbReference>
<dbReference type="InterPro" id="IPR003694">
    <property type="entry name" value="NAD_synthase"/>
</dbReference>
<dbReference type="InterPro" id="IPR022926">
    <property type="entry name" value="NH(3)-dep_NAD(+)_synth"/>
</dbReference>
<dbReference type="InterPro" id="IPR014729">
    <property type="entry name" value="Rossmann-like_a/b/a_fold"/>
</dbReference>
<dbReference type="NCBIfam" id="TIGR00552">
    <property type="entry name" value="nadE"/>
    <property type="match status" value="1"/>
</dbReference>
<dbReference type="NCBIfam" id="NF001979">
    <property type="entry name" value="PRK00768.1"/>
    <property type="match status" value="1"/>
</dbReference>
<dbReference type="PANTHER" id="PTHR23090">
    <property type="entry name" value="NH 3 /GLUTAMINE-DEPENDENT NAD + SYNTHETASE"/>
    <property type="match status" value="1"/>
</dbReference>
<dbReference type="PANTHER" id="PTHR23090:SF7">
    <property type="entry name" value="NH(3)-DEPENDENT NAD(+) SYNTHETASE"/>
    <property type="match status" value="1"/>
</dbReference>
<dbReference type="Pfam" id="PF02540">
    <property type="entry name" value="NAD_synthase"/>
    <property type="match status" value="1"/>
</dbReference>
<dbReference type="SUPFAM" id="SSF52402">
    <property type="entry name" value="Adenine nucleotide alpha hydrolases-like"/>
    <property type="match status" value="1"/>
</dbReference>
<comment type="function">
    <text evidence="1">Catalyzes the ATP-dependent amidation of deamido-NAD to form NAD. Uses ammonia as a nitrogen source.</text>
</comment>
<comment type="catalytic activity">
    <reaction evidence="1">
        <text>deamido-NAD(+) + NH4(+) + ATP = AMP + diphosphate + NAD(+) + H(+)</text>
        <dbReference type="Rhea" id="RHEA:21188"/>
        <dbReference type="ChEBI" id="CHEBI:15378"/>
        <dbReference type="ChEBI" id="CHEBI:28938"/>
        <dbReference type="ChEBI" id="CHEBI:30616"/>
        <dbReference type="ChEBI" id="CHEBI:33019"/>
        <dbReference type="ChEBI" id="CHEBI:57540"/>
        <dbReference type="ChEBI" id="CHEBI:58437"/>
        <dbReference type="ChEBI" id="CHEBI:456215"/>
        <dbReference type="EC" id="6.3.1.5"/>
    </reaction>
</comment>
<comment type="pathway">
    <text evidence="1">Cofactor biosynthesis; NAD(+) biosynthesis; NAD(+) from deamido-NAD(+) (ammonia route): step 1/1.</text>
</comment>
<comment type="subunit">
    <text evidence="1">Homodimer.</text>
</comment>
<comment type="similarity">
    <text evidence="1">Belongs to the NAD synthetase family.</text>
</comment>
<comment type="sequence caution" evidence="2">
    <conflict type="erroneous initiation">
        <sequence resource="EMBL-CDS" id="AAT87538"/>
    </conflict>
</comment>
<evidence type="ECO:0000255" key="1">
    <source>
        <dbReference type="HAMAP-Rule" id="MF_00193"/>
    </source>
</evidence>
<evidence type="ECO:0000305" key="2"/>